<organism>
    <name type="scientific">Shigella flexneri serotype 5b (strain 8401)</name>
    <dbReference type="NCBI Taxonomy" id="373384"/>
    <lineage>
        <taxon>Bacteria</taxon>
        <taxon>Pseudomonadati</taxon>
        <taxon>Pseudomonadota</taxon>
        <taxon>Gammaproteobacteria</taxon>
        <taxon>Enterobacterales</taxon>
        <taxon>Enterobacteriaceae</taxon>
        <taxon>Shigella</taxon>
    </lineage>
</organism>
<evidence type="ECO:0000255" key="1">
    <source>
        <dbReference type="HAMAP-Rule" id="MF_00059"/>
    </source>
</evidence>
<keyword id="KW-0240">DNA-directed RNA polymerase</keyword>
<keyword id="KW-0548">Nucleotidyltransferase</keyword>
<keyword id="KW-0804">Transcription</keyword>
<keyword id="KW-0808">Transferase</keyword>
<reference key="1">
    <citation type="journal article" date="2006" name="BMC Genomics">
        <title>Complete genome sequence of Shigella flexneri 5b and comparison with Shigella flexneri 2a.</title>
        <authorList>
            <person name="Nie H."/>
            <person name="Yang F."/>
            <person name="Zhang X."/>
            <person name="Yang J."/>
            <person name="Chen L."/>
            <person name="Wang J."/>
            <person name="Xiong Z."/>
            <person name="Peng J."/>
            <person name="Sun L."/>
            <person name="Dong J."/>
            <person name="Xue Y."/>
            <person name="Xu X."/>
            <person name="Chen S."/>
            <person name="Yao Z."/>
            <person name="Shen Y."/>
            <person name="Jin Q."/>
        </authorList>
    </citation>
    <scope>NUCLEOTIDE SEQUENCE [LARGE SCALE GENOMIC DNA]</scope>
    <source>
        <strain>8401</strain>
    </source>
</reference>
<gene>
    <name evidence="1" type="primary">rpoA</name>
    <name type="ordered locus">SFV_3315</name>
</gene>
<comment type="function">
    <text evidence="1">DNA-dependent RNA polymerase catalyzes the transcription of DNA into RNA using the four ribonucleoside triphosphates as substrates.</text>
</comment>
<comment type="catalytic activity">
    <reaction evidence="1">
        <text>RNA(n) + a ribonucleoside 5'-triphosphate = RNA(n+1) + diphosphate</text>
        <dbReference type="Rhea" id="RHEA:21248"/>
        <dbReference type="Rhea" id="RHEA-COMP:14527"/>
        <dbReference type="Rhea" id="RHEA-COMP:17342"/>
        <dbReference type="ChEBI" id="CHEBI:33019"/>
        <dbReference type="ChEBI" id="CHEBI:61557"/>
        <dbReference type="ChEBI" id="CHEBI:140395"/>
        <dbReference type="EC" id="2.7.7.6"/>
    </reaction>
</comment>
<comment type="subunit">
    <text evidence="1">Homodimer. The RNAP catalytic core consists of 2 alpha, 1 beta, 1 beta' and 1 omega subunit. When a sigma factor is associated with the core the holoenzyme is formed, which can initiate transcription.</text>
</comment>
<comment type="domain">
    <text evidence="1">The N-terminal domain is essential for RNAP assembly and basal transcription, whereas the C-terminal domain is involved in interaction with transcriptional regulators and with upstream promoter elements.</text>
</comment>
<comment type="similarity">
    <text evidence="1">Belongs to the RNA polymerase alpha chain family.</text>
</comment>
<sequence>MQGSVTEFLKPRLVDIEQVSSTHAKVTLEPLERGFGHTLGNALRRILLSSMPGCAVTEVEIDGVLHEYSTKEGVQEDILEILLNLKGLAVRVQGKDEVILTLNKSGIGPVTAADITHDGDVEIVKPQHVICHLTDENASISMRIKVQRGRGYVPASTRIHSEEDERPIGRLLVDACYSPVERIAYNVEAARVEQRTDLDKLVIEMETNGTIDPEEAIRRAATILAEQLEAFVDLRDVRQPEVKEEKPEFDPILLRPVDDLELTVRSANCLKAEAIHYIGDLVQRTEVELLKTPNLGKKSLTEIKDVLASRGLSLGMRLENWPPASIADE</sequence>
<accession>Q0T007</accession>
<proteinExistence type="inferred from homology"/>
<dbReference type="EC" id="2.7.7.6" evidence="1"/>
<dbReference type="EMBL" id="CP000266">
    <property type="protein sequence ID" value="ABF05358.1"/>
    <property type="molecule type" value="Genomic_DNA"/>
</dbReference>
<dbReference type="RefSeq" id="WP_001162094.1">
    <property type="nucleotide sequence ID" value="NC_008258.1"/>
</dbReference>
<dbReference type="SMR" id="Q0T007"/>
<dbReference type="GeneID" id="93778692"/>
<dbReference type="KEGG" id="sfv:SFV_3315"/>
<dbReference type="HOGENOM" id="CLU_053084_0_0_6"/>
<dbReference type="Proteomes" id="UP000000659">
    <property type="component" value="Chromosome"/>
</dbReference>
<dbReference type="GO" id="GO:0005737">
    <property type="term" value="C:cytoplasm"/>
    <property type="evidence" value="ECO:0007669"/>
    <property type="project" value="UniProtKB-ARBA"/>
</dbReference>
<dbReference type="GO" id="GO:0000428">
    <property type="term" value="C:DNA-directed RNA polymerase complex"/>
    <property type="evidence" value="ECO:0007669"/>
    <property type="project" value="UniProtKB-KW"/>
</dbReference>
<dbReference type="GO" id="GO:0003677">
    <property type="term" value="F:DNA binding"/>
    <property type="evidence" value="ECO:0007669"/>
    <property type="project" value="UniProtKB-UniRule"/>
</dbReference>
<dbReference type="GO" id="GO:0003899">
    <property type="term" value="F:DNA-directed RNA polymerase activity"/>
    <property type="evidence" value="ECO:0007669"/>
    <property type="project" value="UniProtKB-UniRule"/>
</dbReference>
<dbReference type="GO" id="GO:0046983">
    <property type="term" value="F:protein dimerization activity"/>
    <property type="evidence" value="ECO:0007669"/>
    <property type="project" value="InterPro"/>
</dbReference>
<dbReference type="GO" id="GO:0006351">
    <property type="term" value="P:DNA-templated transcription"/>
    <property type="evidence" value="ECO:0007669"/>
    <property type="project" value="UniProtKB-UniRule"/>
</dbReference>
<dbReference type="CDD" id="cd06928">
    <property type="entry name" value="RNAP_alpha_NTD"/>
    <property type="match status" value="1"/>
</dbReference>
<dbReference type="FunFam" id="1.10.150.20:FF:000001">
    <property type="entry name" value="DNA-directed RNA polymerase subunit alpha"/>
    <property type="match status" value="1"/>
</dbReference>
<dbReference type="FunFam" id="2.170.120.12:FF:000001">
    <property type="entry name" value="DNA-directed RNA polymerase subunit alpha"/>
    <property type="match status" value="1"/>
</dbReference>
<dbReference type="Gene3D" id="1.10.150.20">
    <property type="entry name" value="5' to 3' exonuclease, C-terminal subdomain"/>
    <property type="match status" value="1"/>
</dbReference>
<dbReference type="Gene3D" id="2.170.120.12">
    <property type="entry name" value="DNA-directed RNA polymerase, insert domain"/>
    <property type="match status" value="1"/>
</dbReference>
<dbReference type="Gene3D" id="3.30.1360.10">
    <property type="entry name" value="RNA polymerase, RBP11-like subunit"/>
    <property type="match status" value="1"/>
</dbReference>
<dbReference type="HAMAP" id="MF_00059">
    <property type="entry name" value="RNApol_bact_RpoA"/>
    <property type="match status" value="1"/>
</dbReference>
<dbReference type="InterPro" id="IPR011262">
    <property type="entry name" value="DNA-dir_RNA_pol_insert"/>
</dbReference>
<dbReference type="InterPro" id="IPR011263">
    <property type="entry name" value="DNA-dir_RNA_pol_RpoA/D/Rpb3"/>
</dbReference>
<dbReference type="InterPro" id="IPR011773">
    <property type="entry name" value="DNA-dir_RpoA"/>
</dbReference>
<dbReference type="InterPro" id="IPR036603">
    <property type="entry name" value="RBP11-like"/>
</dbReference>
<dbReference type="InterPro" id="IPR011260">
    <property type="entry name" value="RNAP_asu_C"/>
</dbReference>
<dbReference type="InterPro" id="IPR036643">
    <property type="entry name" value="RNApol_insert_sf"/>
</dbReference>
<dbReference type="NCBIfam" id="NF003513">
    <property type="entry name" value="PRK05182.1-2"/>
    <property type="match status" value="1"/>
</dbReference>
<dbReference type="NCBIfam" id="NF003519">
    <property type="entry name" value="PRK05182.2-5"/>
    <property type="match status" value="1"/>
</dbReference>
<dbReference type="NCBIfam" id="TIGR02027">
    <property type="entry name" value="rpoA"/>
    <property type="match status" value="1"/>
</dbReference>
<dbReference type="Pfam" id="PF01000">
    <property type="entry name" value="RNA_pol_A_bac"/>
    <property type="match status" value="1"/>
</dbReference>
<dbReference type="Pfam" id="PF03118">
    <property type="entry name" value="RNA_pol_A_CTD"/>
    <property type="match status" value="1"/>
</dbReference>
<dbReference type="Pfam" id="PF01193">
    <property type="entry name" value="RNA_pol_L"/>
    <property type="match status" value="1"/>
</dbReference>
<dbReference type="SMART" id="SM00662">
    <property type="entry name" value="RPOLD"/>
    <property type="match status" value="1"/>
</dbReference>
<dbReference type="SUPFAM" id="SSF47789">
    <property type="entry name" value="C-terminal domain of RNA polymerase alpha subunit"/>
    <property type="match status" value="1"/>
</dbReference>
<dbReference type="SUPFAM" id="SSF56553">
    <property type="entry name" value="Insert subdomain of RNA polymerase alpha subunit"/>
    <property type="match status" value="1"/>
</dbReference>
<dbReference type="SUPFAM" id="SSF55257">
    <property type="entry name" value="RBP11-like subunits of RNA polymerase"/>
    <property type="match status" value="1"/>
</dbReference>
<protein>
    <recommendedName>
        <fullName evidence="1">DNA-directed RNA polymerase subunit alpha</fullName>
        <shortName evidence="1">RNAP subunit alpha</shortName>
        <ecNumber evidence="1">2.7.7.6</ecNumber>
    </recommendedName>
    <alternativeName>
        <fullName evidence="1">RNA polymerase subunit alpha</fullName>
    </alternativeName>
    <alternativeName>
        <fullName evidence="1">Transcriptase subunit alpha</fullName>
    </alternativeName>
</protein>
<name>RPOA_SHIF8</name>
<feature type="chain" id="PRO_0000296869" description="DNA-directed RNA polymerase subunit alpha">
    <location>
        <begin position="1"/>
        <end position="329"/>
    </location>
</feature>
<feature type="region of interest" description="Alpha N-terminal domain (alpha-NTD)" evidence="1">
    <location>
        <begin position="1"/>
        <end position="235"/>
    </location>
</feature>
<feature type="region of interest" description="Alpha C-terminal domain (alpha-CTD)" evidence="1">
    <location>
        <begin position="249"/>
        <end position="329"/>
    </location>
</feature>